<sequence>MNLVKILFCVFACLVFTVTAVPEPRWKFFKKIEKVGQNIRDGIIKAGPAVAVVGQAASITGK</sequence>
<name>CECA_TRINI</name>
<proteinExistence type="inferred from homology"/>
<comment type="function">
    <text>Has antibacterial activity.</text>
</comment>
<comment type="subcellular location">
    <subcellularLocation>
        <location>Secreted</location>
    </subcellularLocation>
</comment>
<comment type="similarity">
    <text evidence="2">Belongs to the cecropin family.</text>
</comment>
<reference key="1">
    <citation type="journal article" date="1996" name="Insect Biochem. Mol. Biol.">
        <title>PCR differential display of immune gene expression in Trichoplusia ni.</title>
        <authorList>
            <person name="Kang D."/>
            <person name="Liu G."/>
            <person name="Gunne H."/>
            <person name="Steiner H."/>
        </authorList>
    </citation>
    <scope>NUCLEOTIDE SEQUENCE [MRNA]</scope>
</reference>
<accession>P50724</accession>
<organism>
    <name type="scientific">Trichoplusia ni</name>
    <name type="common">Cabbage looper</name>
    <dbReference type="NCBI Taxonomy" id="7111"/>
    <lineage>
        <taxon>Eukaryota</taxon>
        <taxon>Metazoa</taxon>
        <taxon>Ecdysozoa</taxon>
        <taxon>Arthropoda</taxon>
        <taxon>Hexapoda</taxon>
        <taxon>Insecta</taxon>
        <taxon>Pterygota</taxon>
        <taxon>Neoptera</taxon>
        <taxon>Endopterygota</taxon>
        <taxon>Lepidoptera</taxon>
        <taxon>Glossata</taxon>
        <taxon>Ditrysia</taxon>
        <taxon>Noctuoidea</taxon>
        <taxon>Noctuidae</taxon>
        <taxon>Plusiinae</taxon>
        <taxon>Trichoplusia</taxon>
    </lineage>
</organism>
<evidence type="ECO:0000255" key="1"/>
<evidence type="ECO:0000305" key="2"/>
<feature type="signal peptide" evidence="1">
    <location>
        <begin position="1"/>
        <end position="20"/>
    </location>
</feature>
<feature type="propeptide" id="PRO_0000004881" description="Removed by a dipeptidylpeptidase" evidence="1">
    <location>
        <begin position="21"/>
        <end position="24"/>
    </location>
</feature>
<feature type="chain" id="PRO_0000004882" description="Cecropin-A">
    <location>
        <begin position="25"/>
        <end position="60"/>
    </location>
</feature>
<feature type="modified residue" description="Threonine amide" evidence="1">
    <location>
        <position position="60"/>
    </location>
</feature>
<dbReference type="EMBL" id="U38645">
    <property type="protein sequence ID" value="AAA81323.1"/>
    <property type="molecule type" value="mRNA"/>
</dbReference>
<dbReference type="PIR" id="T12014">
    <property type="entry name" value="T12014"/>
</dbReference>
<dbReference type="SMR" id="P50724"/>
<dbReference type="InParanoid" id="P50724"/>
<dbReference type="Proteomes" id="UP000322000">
    <property type="component" value="Unplaced"/>
</dbReference>
<dbReference type="GO" id="GO:0005576">
    <property type="term" value="C:extracellular region"/>
    <property type="evidence" value="ECO:0007669"/>
    <property type="project" value="UniProtKB-SubCell"/>
</dbReference>
<dbReference type="GO" id="GO:0019731">
    <property type="term" value="P:antibacterial humoral response"/>
    <property type="evidence" value="ECO:0007669"/>
    <property type="project" value="InterPro"/>
</dbReference>
<dbReference type="GO" id="GO:0050830">
    <property type="term" value="P:defense response to Gram-positive bacterium"/>
    <property type="evidence" value="ECO:0007669"/>
    <property type="project" value="UniProtKB-ARBA"/>
</dbReference>
<dbReference type="GO" id="GO:0045087">
    <property type="term" value="P:innate immune response"/>
    <property type="evidence" value="ECO:0007669"/>
    <property type="project" value="UniProtKB-KW"/>
</dbReference>
<dbReference type="InterPro" id="IPR000875">
    <property type="entry name" value="Cecropin"/>
</dbReference>
<dbReference type="Pfam" id="PF00272">
    <property type="entry name" value="Cecropin"/>
    <property type="match status" value="1"/>
</dbReference>
<dbReference type="PROSITE" id="PS00268">
    <property type="entry name" value="CECROPIN"/>
    <property type="match status" value="1"/>
</dbReference>
<keyword id="KW-0027">Amidation</keyword>
<keyword id="KW-0044">Antibiotic</keyword>
<keyword id="KW-0929">Antimicrobial</keyword>
<keyword id="KW-0391">Immunity</keyword>
<keyword id="KW-0399">Innate immunity</keyword>
<keyword id="KW-1185">Reference proteome</keyword>
<keyword id="KW-0964">Secreted</keyword>
<keyword id="KW-0732">Signal</keyword>
<protein>
    <recommendedName>
        <fullName>Cecropin-A</fullName>
    </recommendedName>
</protein>